<accession>Q61462</accession>
<accession>Q3U820</accession>
<accession>Q9CWB9</accession>
<accession>Q9D2W2</accession>
<sequence>MGQIEWAMWANEQALASGLILITGGIVATAGRFTQWYFGAYSIAAGVLICLLEYPRGKRKKGSTMERCGQKYLTSVVKLFGPLTRNYYVRAALHFLLSVPAGFLLATILGTVCLAIASVIYLLAAIRGEQWTPIEPKPKERPQVGGTIKQPPTNPPPRPPAEVRKKPSEGEEEAASAGGPQVNPMPVTDEVV</sequence>
<organism>
    <name type="scientific">Mus musculus</name>
    <name type="common">Mouse</name>
    <dbReference type="NCBI Taxonomy" id="10090"/>
    <lineage>
        <taxon>Eukaryota</taxon>
        <taxon>Metazoa</taxon>
        <taxon>Chordata</taxon>
        <taxon>Craniata</taxon>
        <taxon>Vertebrata</taxon>
        <taxon>Euteleostomi</taxon>
        <taxon>Mammalia</taxon>
        <taxon>Eutheria</taxon>
        <taxon>Euarchontoglires</taxon>
        <taxon>Glires</taxon>
        <taxon>Rodentia</taxon>
        <taxon>Myomorpha</taxon>
        <taxon>Muroidea</taxon>
        <taxon>Muridae</taxon>
        <taxon>Murinae</taxon>
        <taxon>Mus</taxon>
        <taxon>Mus</taxon>
    </lineage>
</organism>
<gene>
    <name evidence="10" type="primary">Cyba</name>
</gene>
<dbReference type="EMBL" id="M31775">
    <property type="protein sequence ID" value="AAA37513.1"/>
    <property type="molecule type" value="mRNA"/>
</dbReference>
<dbReference type="EMBL" id="AK018713">
    <property type="protein sequence ID" value="BAB31361.1"/>
    <property type="molecule type" value="mRNA"/>
</dbReference>
<dbReference type="EMBL" id="AK021200">
    <property type="protein sequence ID" value="BAB32327.1"/>
    <property type="molecule type" value="mRNA"/>
</dbReference>
<dbReference type="EMBL" id="AK152414">
    <property type="protein sequence ID" value="BAE31199.1"/>
    <property type="molecule type" value="mRNA"/>
</dbReference>
<dbReference type="EMBL" id="BC026791">
    <property type="protein sequence ID" value="AAH26791.1"/>
    <property type="molecule type" value="mRNA"/>
</dbReference>
<dbReference type="CCDS" id="CCDS22737.1">
    <molecule id="Q61462-1"/>
</dbReference>
<dbReference type="CCDS" id="CCDS85623.1">
    <molecule id="Q61462-2"/>
</dbReference>
<dbReference type="PIR" id="A36747">
    <property type="entry name" value="A36747"/>
</dbReference>
<dbReference type="RefSeq" id="NP_001288213.1">
    <molecule id="Q61462-2"/>
    <property type="nucleotide sequence ID" value="NM_001301284.1"/>
</dbReference>
<dbReference type="RefSeq" id="NP_031832.2">
    <molecule id="Q61462-1"/>
    <property type="nucleotide sequence ID" value="NM_007806.3"/>
</dbReference>
<dbReference type="SMR" id="Q61462"/>
<dbReference type="BioGRID" id="198989">
    <property type="interactions" value="3"/>
</dbReference>
<dbReference type="DIP" id="DIP-60456N"/>
<dbReference type="FunCoup" id="Q61462">
    <property type="interactions" value="630"/>
</dbReference>
<dbReference type="IntAct" id="Q61462">
    <property type="interactions" value="3"/>
</dbReference>
<dbReference type="MINT" id="Q61462"/>
<dbReference type="STRING" id="10090.ENSMUSP00000017604"/>
<dbReference type="iPTMnet" id="Q61462"/>
<dbReference type="PhosphoSitePlus" id="Q61462"/>
<dbReference type="SwissPalm" id="Q61462"/>
<dbReference type="PaxDb" id="10090-ENSMUSP00000017604"/>
<dbReference type="ProteomicsDB" id="285355">
    <molecule id="Q61462-1"/>
</dbReference>
<dbReference type="ProteomicsDB" id="285356">
    <molecule id="Q61462-2"/>
</dbReference>
<dbReference type="Antibodypedia" id="4009">
    <property type="antibodies" value="295 antibodies from 30 providers"/>
</dbReference>
<dbReference type="Ensembl" id="ENSMUST00000017604.10">
    <molecule id="Q61462-1"/>
    <property type="protein sequence ID" value="ENSMUSP00000017604.9"/>
    <property type="gene ID" value="ENSMUSG00000006519.12"/>
</dbReference>
<dbReference type="Ensembl" id="ENSMUST00000212600.2">
    <molecule id="Q61462-2"/>
    <property type="protein sequence ID" value="ENSMUSP00000148320.2"/>
    <property type="gene ID" value="ENSMUSG00000006519.12"/>
</dbReference>
<dbReference type="GeneID" id="13057"/>
<dbReference type="KEGG" id="mmu:13057"/>
<dbReference type="UCSC" id="uc009nsp.2">
    <molecule id="Q61462-1"/>
    <property type="organism name" value="mouse"/>
</dbReference>
<dbReference type="UCSC" id="uc009nsq.2">
    <molecule id="Q61462-2"/>
    <property type="organism name" value="mouse"/>
</dbReference>
<dbReference type="AGR" id="MGI:1316658"/>
<dbReference type="CTD" id="1535"/>
<dbReference type="MGI" id="MGI:1316658">
    <property type="gene designation" value="Cyba"/>
</dbReference>
<dbReference type="VEuPathDB" id="HostDB:ENSMUSG00000006519"/>
<dbReference type="eggNOG" id="ENOG502QVK1">
    <property type="taxonomic scope" value="Eukaryota"/>
</dbReference>
<dbReference type="GeneTree" id="ENSGT00390000002290"/>
<dbReference type="HOGENOM" id="CLU_125024_0_0_1"/>
<dbReference type="InParanoid" id="Q61462"/>
<dbReference type="OMA" id="ARTGQYC"/>
<dbReference type="OrthoDB" id="2445232at2759"/>
<dbReference type="PhylomeDB" id="Q61462"/>
<dbReference type="TreeFam" id="TF328901"/>
<dbReference type="Reactome" id="R-MMU-1222556">
    <property type="pathway name" value="ROS and RNS production in phagocytes"/>
</dbReference>
<dbReference type="Reactome" id="R-MMU-1236973">
    <property type="pathway name" value="Cross-presentation of particulate exogenous antigens (phagosomes)"/>
</dbReference>
<dbReference type="Reactome" id="R-MMU-3299685">
    <property type="pathway name" value="Detoxification of Reactive Oxygen Species"/>
</dbReference>
<dbReference type="Reactome" id="R-MMU-4420097">
    <property type="pathway name" value="VEGFA-VEGFR2 Pathway"/>
</dbReference>
<dbReference type="Reactome" id="R-MMU-5668599">
    <property type="pathway name" value="RHO GTPases Activate NADPH Oxidases"/>
</dbReference>
<dbReference type="Reactome" id="R-MMU-6798695">
    <property type="pathway name" value="Neutrophil degranulation"/>
</dbReference>
<dbReference type="Reactome" id="R-MMU-9013149">
    <property type="pathway name" value="RAC1 GTPase cycle"/>
</dbReference>
<dbReference type="Reactome" id="R-MMU-9013404">
    <property type="pathway name" value="RAC2 GTPase cycle"/>
</dbReference>
<dbReference type="Reactome" id="R-MMU-9013423">
    <property type="pathway name" value="RAC3 GTPase cycle"/>
</dbReference>
<dbReference type="BioGRID-ORCS" id="13057">
    <property type="hits" value="2 hits in 76 CRISPR screens"/>
</dbReference>
<dbReference type="ChiTaRS" id="Cyba">
    <property type="organism name" value="mouse"/>
</dbReference>
<dbReference type="PRO" id="PR:Q61462"/>
<dbReference type="Proteomes" id="UP000000589">
    <property type="component" value="Chromosome 8"/>
</dbReference>
<dbReference type="RNAct" id="Q61462">
    <property type="molecule type" value="protein"/>
</dbReference>
<dbReference type="Bgee" id="ENSMUSG00000006519">
    <property type="expression patterns" value="Expressed in granulocyte and 228 other cell types or tissues"/>
</dbReference>
<dbReference type="ExpressionAtlas" id="Q61462">
    <property type="expression patterns" value="baseline and differential"/>
</dbReference>
<dbReference type="GO" id="GO:0016324">
    <property type="term" value="C:apical plasma membrane"/>
    <property type="evidence" value="ECO:0007669"/>
    <property type="project" value="Ensembl"/>
</dbReference>
<dbReference type="GO" id="GO:0005737">
    <property type="term" value="C:cytoplasm"/>
    <property type="evidence" value="ECO:0000314"/>
    <property type="project" value="MGI"/>
</dbReference>
<dbReference type="GO" id="GO:0030425">
    <property type="term" value="C:dendrite"/>
    <property type="evidence" value="ECO:0007669"/>
    <property type="project" value="Ensembl"/>
</dbReference>
<dbReference type="GO" id="GO:0005768">
    <property type="term" value="C:endosome"/>
    <property type="evidence" value="ECO:0000314"/>
    <property type="project" value="MGI"/>
</dbReference>
<dbReference type="GO" id="GO:0005925">
    <property type="term" value="C:focal adhesion"/>
    <property type="evidence" value="ECO:0007669"/>
    <property type="project" value="Ensembl"/>
</dbReference>
<dbReference type="GO" id="GO:0005739">
    <property type="term" value="C:mitochondrion"/>
    <property type="evidence" value="ECO:0007005"/>
    <property type="project" value="MGI"/>
</dbReference>
<dbReference type="GO" id="GO:0043020">
    <property type="term" value="C:NADPH oxidase complex"/>
    <property type="evidence" value="ECO:0000314"/>
    <property type="project" value="UniProtKB"/>
</dbReference>
<dbReference type="GO" id="GO:0043025">
    <property type="term" value="C:neuronal cell body"/>
    <property type="evidence" value="ECO:0007669"/>
    <property type="project" value="Ensembl"/>
</dbReference>
<dbReference type="GO" id="GO:0097038">
    <property type="term" value="C:perinuclear endoplasmic reticulum"/>
    <property type="evidence" value="ECO:0007669"/>
    <property type="project" value="Ensembl"/>
</dbReference>
<dbReference type="GO" id="GO:0001725">
    <property type="term" value="C:stress fiber"/>
    <property type="evidence" value="ECO:0007669"/>
    <property type="project" value="Ensembl"/>
</dbReference>
<dbReference type="GO" id="GO:0009055">
    <property type="term" value="F:electron transfer activity"/>
    <property type="evidence" value="ECO:0007669"/>
    <property type="project" value="Ensembl"/>
</dbReference>
<dbReference type="GO" id="GO:0020037">
    <property type="term" value="F:heme binding"/>
    <property type="evidence" value="ECO:0007669"/>
    <property type="project" value="InterPro"/>
</dbReference>
<dbReference type="GO" id="GO:0046872">
    <property type="term" value="F:metal ion binding"/>
    <property type="evidence" value="ECO:0007669"/>
    <property type="project" value="UniProtKB-KW"/>
</dbReference>
<dbReference type="GO" id="GO:0046982">
    <property type="term" value="F:protein heterodimerization activity"/>
    <property type="evidence" value="ECO:0007669"/>
    <property type="project" value="Ensembl"/>
</dbReference>
<dbReference type="GO" id="GO:0017124">
    <property type="term" value="F:SH3 domain binding"/>
    <property type="evidence" value="ECO:0007669"/>
    <property type="project" value="Ensembl"/>
</dbReference>
<dbReference type="GO" id="GO:0016175">
    <property type="term" value="F:superoxide-generating NAD(P)H oxidase activity"/>
    <property type="evidence" value="ECO:0007669"/>
    <property type="project" value="Ensembl"/>
</dbReference>
<dbReference type="GO" id="GO:1904385">
    <property type="term" value="P:cellular response to angiotensin"/>
    <property type="evidence" value="ECO:0007669"/>
    <property type="project" value="Ensembl"/>
</dbReference>
<dbReference type="GO" id="GO:0071480">
    <property type="term" value="P:cellular response to gamma radiation"/>
    <property type="evidence" value="ECO:0007669"/>
    <property type="project" value="Ensembl"/>
</dbReference>
<dbReference type="GO" id="GO:0071333">
    <property type="term" value="P:cellular response to glucose stimulus"/>
    <property type="evidence" value="ECO:0007669"/>
    <property type="project" value="Ensembl"/>
</dbReference>
<dbReference type="GO" id="GO:1904845">
    <property type="term" value="P:cellular response to L-glutamine"/>
    <property type="evidence" value="ECO:0007669"/>
    <property type="project" value="Ensembl"/>
</dbReference>
<dbReference type="GO" id="GO:0071260">
    <property type="term" value="P:cellular response to mechanical stimulus"/>
    <property type="evidence" value="ECO:0007669"/>
    <property type="project" value="Ensembl"/>
</dbReference>
<dbReference type="GO" id="GO:0071356">
    <property type="term" value="P:cellular response to tumor necrosis factor"/>
    <property type="evidence" value="ECO:0007669"/>
    <property type="project" value="Ensembl"/>
</dbReference>
<dbReference type="GO" id="GO:0017004">
    <property type="term" value="P:cytochrome complex assembly"/>
    <property type="evidence" value="ECO:0007669"/>
    <property type="project" value="Ensembl"/>
</dbReference>
<dbReference type="GO" id="GO:0051649">
    <property type="term" value="P:establishment of localization in cell"/>
    <property type="evidence" value="ECO:0000315"/>
    <property type="project" value="MGI"/>
</dbReference>
<dbReference type="GO" id="GO:0050665">
    <property type="term" value="P:hydrogen peroxide biosynthetic process"/>
    <property type="evidence" value="ECO:0007669"/>
    <property type="project" value="Ensembl"/>
</dbReference>
<dbReference type="GO" id="GO:0006954">
    <property type="term" value="P:inflammatory response"/>
    <property type="evidence" value="ECO:0007669"/>
    <property type="project" value="Ensembl"/>
</dbReference>
<dbReference type="GO" id="GO:0045087">
    <property type="term" value="P:innate immune response"/>
    <property type="evidence" value="ECO:0000315"/>
    <property type="project" value="UniProtKB"/>
</dbReference>
<dbReference type="GO" id="GO:0070254">
    <property type="term" value="P:mucus secretion"/>
    <property type="evidence" value="ECO:0000315"/>
    <property type="project" value="MGI"/>
</dbReference>
<dbReference type="GO" id="GO:0003106">
    <property type="term" value="P:negative regulation of glomerular filtration by angiotensin"/>
    <property type="evidence" value="ECO:0007669"/>
    <property type="project" value="Ensembl"/>
</dbReference>
<dbReference type="GO" id="GO:0030307">
    <property type="term" value="P:positive regulation of cell growth"/>
    <property type="evidence" value="ECO:0007669"/>
    <property type="project" value="Ensembl"/>
</dbReference>
<dbReference type="GO" id="GO:1900426">
    <property type="term" value="P:positive regulation of defense response to bacterium"/>
    <property type="evidence" value="ECO:0007669"/>
    <property type="project" value="Ensembl"/>
</dbReference>
<dbReference type="GO" id="GO:0001938">
    <property type="term" value="P:positive regulation of endothelial cell proliferation"/>
    <property type="evidence" value="ECO:0007669"/>
    <property type="project" value="Ensembl"/>
</dbReference>
<dbReference type="GO" id="GO:0032755">
    <property type="term" value="P:positive regulation of interleukin-6 production"/>
    <property type="evidence" value="ECO:0007669"/>
    <property type="project" value="Ensembl"/>
</dbReference>
<dbReference type="GO" id="GO:0070257">
    <property type="term" value="P:positive regulation of mucus secretion"/>
    <property type="evidence" value="ECO:0000315"/>
    <property type="project" value="MGI"/>
</dbReference>
<dbReference type="GO" id="GO:0050766">
    <property type="term" value="P:positive regulation of phagocytosis"/>
    <property type="evidence" value="ECO:0007669"/>
    <property type="project" value="Ensembl"/>
</dbReference>
<dbReference type="GO" id="GO:1903428">
    <property type="term" value="P:positive regulation of reactive oxygen species biosynthetic process"/>
    <property type="evidence" value="ECO:0007669"/>
    <property type="project" value="Ensembl"/>
</dbReference>
<dbReference type="GO" id="GO:0048661">
    <property type="term" value="P:positive regulation of smooth muscle cell proliferation"/>
    <property type="evidence" value="ECO:0007669"/>
    <property type="project" value="Ensembl"/>
</dbReference>
<dbReference type="GO" id="GO:0032930">
    <property type="term" value="P:positive regulation of superoxide anion generation"/>
    <property type="evidence" value="ECO:0007669"/>
    <property type="project" value="Ensembl"/>
</dbReference>
<dbReference type="GO" id="GO:0034137">
    <property type="term" value="P:positive regulation of toll-like receptor 2 signaling pathway"/>
    <property type="evidence" value="ECO:0007669"/>
    <property type="project" value="Ensembl"/>
</dbReference>
<dbReference type="GO" id="GO:0032760">
    <property type="term" value="P:positive regulation of tumor necrosis factor production"/>
    <property type="evidence" value="ECO:0007669"/>
    <property type="project" value="Ensembl"/>
</dbReference>
<dbReference type="GO" id="GO:0072593">
    <property type="term" value="P:reactive oxygen species metabolic process"/>
    <property type="evidence" value="ECO:0000315"/>
    <property type="project" value="MGI"/>
</dbReference>
<dbReference type="GO" id="GO:0051279">
    <property type="term" value="P:regulation of release of sequestered calcium ion into cytosol"/>
    <property type="evidence" value="ECO:0000315"/>
    <property type="project" value="MGI"/>
</dbReference>
<dbReference type="GO" id="GO:0045730">
    <property type="term" value="P:respiratory burst"/>
    <property type="evidence" value="ECO:0007669"/>
    <property type="project" value="Ensembl"/>
</dbReference>
<dbReference type="GO" id="GO:0014823">
    <property type="term" value="P:response to activity"/>
    <property type="evidence" value="ECO:0007669"/>
    <property type="project" value="Ensembl"/>
</dbReference>
<dbReference type="GO" id="GO:1904044">
    <property type="term" value="P:response to aldosterone"/>
    <property type="evidence" value="ECO:0007669"/>
    <property type="project" value="Ensembl"/>
</dbReference>
<dbReference type="GO" id="GO:0001666">
    <property type="term" value="P:response to hypoxia"/>
    <property type="evidence" value="ECO:0007669"/>
    <property type="project" value="Ensembl"/>
</dbReference>
<dbReference type="GO" id="GO:0070555">
    <property type="term" value="P:response to interleukin-1"/>
    <property type="evidence" value="ECO:0007669"/>
    <property type="project" value="Ensembl"/>
</dbReference>
<dbReference type="GO" id="GO:0031667">
    <property type="term" value="P:response to nutrient levels"/>
    <property type="evidence" value="ECO:0007669"/>
    <property type="project" value="Ensembl"/>
</dbReference>
<dbReference type="GO" id="GO:0009410">
    <property type="term" value="P:response to xenobiotic stimulus"/>
    <property type="evidence" value="ECO:0007669"/>
    <property type="project" value="Ensembl"/>
</dbReference>
<dbReference type="GO" id="GO:0014895">
    <property type="term" value="P:smooth muscle hypertrophy"/>
    <property type="evidence" value="ECO:0007669"/>
    <property type="project" value="Ensembl"/>
</dbReference>
<dbReference type="GO" id="GO:0042554">
    <property type="term" value="P:superoxide anion generation"/>
    <property type="evidence" value="ECO:0007669"/>
    <property type="project" value="Ensembl"/>
</dbReference>
<dbReference type="InterPro" id="IPR007732">
    <property type="entry name" value="Cyt_b558_asu"/>
</dbReference>
<dbReference type="PANTHER" id="PTHR15168">
    <property type="entry name" value="CYTOCHROME B-245 LIGHT CHAIN"/>
    <property type="match status" value="1"/>
</dbReference>
<dbReference type="PANTHER" id="PTHR15168:SF0">
    <property type="entry name" value="CYTOCHROME B-245 LIGHT CHAIN"/>
    <property type="match status" value="1"/>
</dbReference>
<dbReference type="Pfam" id="PF05038">
    <property type="entry name" value="Cytochrom_B558a"/>
    <property type="match status" value="1"/>
</dbReference>
<dbReference type="PIRSF" id="PIRSF019635">
    <property type="entry name" value="Cytochr_b558a"/>
    <property type="match status" value="1"/>
</dbReference>
<evidence type="ECO:0000250" key="1">
    <source>
        <dbReference type="UniProtKB" id="P13498"/>
    </source>
</evidence>
<evidence type="ECO:0000256" key="2">
    <source>
        <dbReference type="SAM" id="MobiDB-lite"/>
    </source>
</evidence>
<evidence type="ECO:0000269" key="3">
    <source>
    </source>
</evidence>
<evidence type="ECO:0000269" key="4">
    <source>
    </source>
</evidence>
<evidence type="ECO:0000269" key="5">
    <source>
    </source>
</evidence>
<evidence type="ECO:0000269" key="6">
    <source>
    </source>
</evidence>
<evidence type="ECO:0000269" key="7">
    <source>
    </source>
</evidence>
<evidence type="ECO:0000303" key="8">
    <source>
    </source>
</evidence>
<evidence type="ECO:0000305" key="9"/>
<evidence type="ECO:0000312" key="10">
    <source>
        <dbReference type="MGI" id="MGI:1316658"/>
    </source>
</evidence>
<evidence type="ECO:0007744" key="11">
    <source>
    </source>
</evidence>
<evidence type="ECO:0007744" key="12">
    <source>
    </source>
</evidence>
<proteinExistence type="evidence at protein level"/>
<reference key="1">
    <citation type="journal article" date="1989" name="Biochem. Biophys. Res. Commun.">
        <title>Complementary DNA for the mouse homolog of the small subunit of human cytochrome b558.</title>
        <authorList>
            <person name="Sumimoto H."/>
            <person name="Nozaki M."/>
            <person name="Sasaki H."/>
            <person name="Takeshige K."/>
            <person name="Sakaki Y."/>
            <person name="Minakami S."/>
        </authorList>
    </citation>
    <scope>NUCLEOTIDE SEQUENCE [MRNA] OF 3-192 (ISOFORM 1)</scope>
    <scope>TISSUE SPECIFICITY</scope>
    <source>
        <tissue>Macrophage</tissue>
    </source>
</reference>
<reference key="2">
    <citation type="journal article" date="2005" name="Science">
        <title>The transcriptional landscape of the mammalian genome.</title>
        <authorList>
            <person name="Carninci P."/>
            <person name="Kasukawa T."/>
            <person name="Katayama S."/>
            <person name="Gough J."/>
            <person name="Frith M.C."/>
            <person name="Maeda N."/>
            <person name="Oyama R."/>
            <person name="Ravasi T."/>
            <person name="Lenhard B."/>
            <person name="Wells C."/>
            <person name="Kodzius R."/>
            <person name="Shimokawa K."/>
            <person name="Bajic V.B."/>
            <person name="Brenner S.E."/>
            <person name="Batalov S."/>
            <person name="Forrest A.R."/>
            <person name="Zavolan M."/>
            <person name="Davis M.J."/>
            <person name="Wilming L.G."/>
            <person name="Aidinis V."/>
            <person name="Allen J.E."/>
            <person name="Ambesi-Impiombato A."/>
            <person name="Apweiler R."/>
            <person name="Aturaliya R.N."/>
            <person name="Bailey T.L."/>
            <person name="Bansal M."/>
            <person name="Baxter L."/>
            <person name="Beisel K.W."/>
            <person name="Bersano T."/>
            <person name="Bono H."/>
            <person name="Chalk A.M."/>
            <person name="Chiu K.P."/>
            <person name="Choudhary V."/>
            <person name="Christoffels A."/>
            <person name="Clutterbuck D.R."/>
            <person name="Crowe M.L."/>
            <person name="Dalla E."/>
            <person name="Dalrymple B.P."/>
            <person name="de Bono B."/>
            <person name="Della Gatta G."/>
            <person name="di Bernardo D."/>
            <person name="Down T."/>
            <person name="Engstrom P."/>
            <person name="Fagiolini M."/>
            <person name="Faulkner G."/>
            <person name="Fletcher C.F."/>
            <person name="Fukushima T."/>
            <person name="Furuno M."/>
            <person name="Futaki S."/>
            <person name="Gariboldi M."/>
            <person name="Georgii-Hemming P."/>
            <person name="Gingeras T.R."/>
            <person name="Gojobori T."/>
            <person name="Green R.E."/>
            <person name="Gustincich S."/>
            <person name="Harbers M."/>
            <person name="Hayashi Y."/>
            <person name="Hensch T.K."/>
            <person name="Hirokawa N."/>
            <person name="Hill D."/>
            <person name="Huminiecki L."/>
            <person name="Iacono M."/>
            <person name="Ikeo K."/>
            <person name="Iwama A."/>
            <person name="Ishikawa T."/>
            <person name="Jakt M."/>
            <person name="Kanapin A."/>
            <person name="Katoh M."/>
            <person name="Kawasawa Y."/>
            <person name="Kelso J."/>
            <person name="Kitamura H."/>
            <person name="Kitano H."/>
            <person name="Kollias G."/>
            <person name="Krishnan S.P."/>
            <person name="Kruger A."/>
            <person name="Kummerfeld S.K."/>
            <person name="Kurochkin I.V."/>
            <person name="Lareau L.F."/>
            <person name="Lazarevic D."/>
            <person name="Lipovich L."/>
            <person name="Liu J."/>
            <person name="Liuni S."/>
            <person name="McWilliam S."/>
            <person name="Madan Babu M."/>
            <person name="Madera M."/>
            <person name="Marchionni L."/>
            <person name="Matsuda H."/>
            <person name="Matsuzawa S."/>
            <person name="Miki H."/>
            <person name="Mignone F."/>
            <person name="Miyake S."/>
            <person name="Morris K."/>
            <person name="Mottagui-Tabar S."/>
            <person name="Mulder N."/>
            <person name="Nakano N."/>
            <person name="Nakauchi H."/>
            <person name="Ng P."/>
            <person name="Nilsson R."/>
            <person name="Nishiguchi S."/>
            <person name="Nishikawa S."/>
            <person name="Nori F."/>
            <person name="Ohara O."/>
            <person name="Okazaki Y."/>
            <person name="Orlando V."/>
            <person name="Pang K.C."/>
            <person name="Pavan W.J."/>
            <person name="Pavesi G."/>
            <person name="Pesole G."/>
            <person name="Petrovsky N."/>
            <person name="Piazza S."/>
            <person name="Reed J."/>
            <person name="Reid J.F."/>
            <person name="Ring B.Z."/>
            <person name="Ringwald M."/>
            <person name="Rost B."/>
            <person name="Ruan Y."/>
            <person name="Salzberg S.L."/>
            <person name="Sandelin A."/>
            <person name="Schneider C."/>
            <person name="Schoenbach C."/>
            <person name="Sekiguchi K."/>
            <person name="Semple C.A."/>
            <person name="Seno S."/>
            <person name="Sessa L."/>
            <person name="Sheng Y."/>
            <person name="Shibata Y."/>
            <person name="Shimada H."/>
            <person name="Shimada K."/>
            <person name="Silva D."/>
            <person name="Sinclair B."/>
            <person name="Sperling S."/>
            <person name="Stupka E."/>
            <person name="Sugiura K."/>
            <person name="Sultana R."/>
            <person name="Takenaka Y."/>
            <person name="Taki K."/>
            <person name="Tammoja K."/>
            <person name="Tan S.L."/>
            <person name="Tang S."/>
            <person name="Taylor M.S."/>
            <person name="Tegner J."/>
            <person name="Teichmann S.A."/>
            <person name="Ueda H.R."/>
            <person name="van Nimwegen E."/>
            <person name="Verardo R."/>
            <person name="Wei C.L."/>
            <person name="Yagi K."/>
            <person name="Yamanishi H."/>
            <person name="Zabarovsky E."/>
            <person name="Zhu S."/>
            <person name="Zimmer A."/>
            <person name="Hide W."/>
            <person name="Bult C."/>
            <person name="Grimmond S.M."/>
            <person name="Teasdale R.D."/>
            <person name="Liu E.T."/>
            <person name="Brusic V."/>
            <person name="Quackenbush J."/>
            <person name="Wahlestedt C."/>
            <person name="Mattick J.S."/>
            <person name="Hume D.A."/>
            <person name="Kai C."/>
            <person name="Sasaki D."/>
            <person name="Tomaru Y."/>
            <person name="Fukuda S."/>
            <person name="Kanamori-Katayama M."/>
            <person name="Suzuki M."/>
            <person name="Aoki J."/>
            <person name="Arakawa T."/>
            <person name="Iida J."/>
            <person name="Imamura K."/>
            <person name="Itoh M."/>
            <person name="Kato T."/>
            <person name="Kawaji H."/>
            <person name="Kawagashira N."/>
            <person name="Kawashima T."/>
            <person name="Kojima M."/>
            <person name="Kondo S."/>
            <person name="Konno H."/>
            <person name="Nakano K."/>
            <person name="Ninomiya N."/>
            <person name="Nishio T."/>
            <person name="Okada M."/>
            <person name="Plessy C."/>
            <person name="Shibata K."/>
            <person name="Shiraki T."/>
            <person name="Suzuki S."/>
            <person name="Tagami M."/>
            <person name="Waki K."/>
            <person name="Watahiki A."/>
            <person name="Okamura-Oho Y."/>
            <person name="Suzuki H."/>
            <person name="Kawai J."/>
            <person name="Hayashizaki Y."/>
        </authorList>
    </citation>
    <scope>NUCLEOTIDE SEQUENCE [LARGE SCALE MRNA] (ISOFORMS 1 AND 2)</scope>
    <source>
        <strain>C57BL/6J</strain>
        <tissue>Bone marrow</tissue>
        <tissue>Embryonic stem cell</tissue>
        <tissue>Kidney</tissue>
    </source>
</reference>
<reference key="3">
    <citation type="journal article" date="2004" name="Genome Res.">
        <title>The status, quality, and expansion of the NIH full-length cDNA project: the Mammalian Gene Collection (MGC).</title>
        <authorList>
            <consortium name="The MGC Project Team"/>
        </authorList>
    </citation>
    <scope>NUCLEOTIDE SEQUENCE [LARGE SCALE MRNA] (ISOFORM 1)</scope>
    <source>
        <strain>FVB/N</strain>
        <tissue>Mammary gland</tissue>
    </source>
</reference>
<reference key="4">
    <citation type="journal article" date="2009" name="Immunity">
        <title>The phagosomal proteome in interferon-gamma-activated macrophages.</title>
        <authorList>
            <person name="Trost M."/>
            <person name="English L."/>
            <person name="Lemieux S."/>
            <person name="Courcelles M."/>
            <person name="Desjardins M."/>
            <person name="Thibault P."/>
        </authorList>
    </citation>
    <scope>PHOSPHORYLATION [LARGE SCALE ANALYSIS] AT SER-168 AND SER-176</scope>
    <scope>IDENTIFICATION BY MASS SPECTROMETRY [LARGE SCALE ANALYSIS]</scope>
</reference>
<reference key="5">
    <citation type="journal article" date="2009" name="Sci. Signal.">
        <title>Tks5-dependent, nox-mediated generation of reactive oxygen species is necessary for invadopodia formation.</title>
        <authorList>
            <person name="Diaz B."/>
            <person name="Shani G."/>
            <person name="Pass I."/>
            <person name="Anderson D."/>
            <person name="Quintavalle M."/>
            <person name="Courtneidge S.A."/>
        </authorList>
    </citation>
    <scope>DISRUPTION PHENOTYPE</scope>
    <scope>INTERACTION WITH SH3PXD2A</scope>
</reference>
<reference key="6">
    <citation type="journal article" date="2010" name="Cell">
        <title>A tissue-specific atlas of mouse protein phosphorylation and expression.</title>
        <authorList>
            <person name="Huttlin E.L."/>
            <person name="Jedrychowski M.P."/>
            <person name="Elias J.E."/>
            <person name="Goswami T."/>
            <person name="Rad R."/>
            <person name="Beausoleil S.A."/>
            <person name="Villen J."/>
            <person name="Haas W."/>
            <person name="Sowa M.E."/>
            <person name="Gygi S.P."/>
        </authorList>
    </citation>
    <scope>PHOSPHORYLATION [LARGE SCALE ANALYSIS] AT SER-168 AND SER-176</scope>
    <scope>IDENTIFICATION BY MASS SPECTROMETRY [LARGE SCALE ANALYSIS]</scope>
    <source>
        <tissue>Kidney</tissue>
        <tissue>Liver</tissue>
        <tissue>Lung</tissue>
        <tissue>Spleen</tissue>
    </source>
</reference>
<reference key="7">
    <citation type="journal article" date="2011" name="Science">
        <title>A family of IFN-gamma-inducible 65-kD GTPases protects against bacterial infection.</title>
        <authorList>
            <person name="Kim B.H."/>
            <person name="Shenoy A.R."/>
            <person name="Kumar P."/>
            <person name="Das R."/>
            <person name="Tiwari S."/>
            <person name="MacMicking J.D."/>
        </authorList>
    </citation>
    <scope>INTERACTION WITH GBP7</scope>
</reference>
<reference key="8">
    <citation type="journal article" date="2015" name="Nat. Commun.">
        <title>Functional genomics identifies negative regulatory nodes controlling phagocyte oxidative burst.</title>
        <authorList>
            <person name="Graham D.B."/>
            <person name="Becker C.E."/>
            <person name="Doan A."/>
            <person name="Goel G."/>
            <person name="Villablanca E.J."/>
            <person name="Knights D."/>
            <person name="Mok A."/>
            <person name="Ng A.C."/>
            <person name="Doench J.G."/>
            <person name="Root D.E."/>
            <person name="Clish C.B."/>
            <person name="Xavier R.J."/>
        </authorList>
    </citation>
    <scope>UBIQUITINATION AT LYS-149</scope>
</reference>
<reference key="9">
    <citation type="journal article" date="2017" name="J. Exp. Med.">
        <title>Eros is a novel transmembrane protein that controls the phagocyte respiratory burst and is essential for innate immunity.</title>
        <authorList>
            <person name="Thomas D.C."/>
            <person name="Clare S."/>
            <person name="Sowerby J.M."/>
            <person name="Pardo M."/>
            <person name="Juss J.K."/>
            <person name="Goulding D.A."/>
            <person name="van der Weyden L."/>
            <person name="Storisteanu D."/>
            <person name="Prakash A."/>
            <person name="Espeli M."/>
            <person name="Flint S."/>
            <person name="Lee J.C."/>
            <person name="Hoenderdos K."/>
            <person name="Kane L."/>
            <person name="Harcourt K."/>
            <person name="Mukhopadhyay S."/>
            <person name="Umrania Y."/>
            <person name="Antrobus R."/>
            <person name="Nathan J.A."/>
            <person name="Adams D.J."/>
            <person name="Bateman A."/>
            <person name="Choudhary J.S."/>
            <person name="Lyons P.A."/>
            <person name="Condliffe A.M."/>
            <person name="Chilvers E.R."/>
            <person name="Dougan G."/>
            <person name="Smith K.G."/>
        </authorList>
    </citation>
    <scope>DISRUPTION PHENOTYPE</scope>
    <scope>SUBCELLULAR LOCATION</scope>
</reference>
<keyword id="KW-0025">Alternative splicing</keyword>
<keyword id="KW-1003">Cell membrane</keyword>
<keyword id="KW-0249">Electron transport</keyword>
<keyword id="KW-0349">Heme</keyword>
<keyword id="KW-0408">Iron</keyword>
<keyword id="KW-1017">Isopeptide bond</keyword>
<keyword id="KW-0472">Membrane</keyword>
<keyword id="KW-0479">Metal-binding</keyword>
<keyword id="KW-0521">NADP</keyword>
<keyword id="KW-0560">Oxidoreductase</keyword>
<keyword id="KW-0597">Phosphoprotein</keyword>
<keyword id="KW-1185">Reference proteome</keyword>
<keyword id="KW-0812">Transmembrane</keyword>
<keyword id="KW-1133">Transmembrane helix</keyword>
<keyword id="KW-0813">Transport</keyword>
<keyword id="KW-0832">Ubl conjugation</keyword>
<feature type="initiator methionine" description="Removed" evidence="1">
    <location>
        <position position="1"/>
    </location>
</feature>
<feature type="chain" id="PRO_0000144908" description="Cytochrome b-245 light chain">
    <location>
        <begin position="2"/>
        <end position="192"/>
    </location>
</feature>
<feature type="topological domain" description="Cytoplasmic" evidence="1">
    <location>
        <begin position="2"/>
        <end position="7"/>
    </location>
</feature>
<feature type="transmembrane region" description="Helical" evidence="1">
    <location>
        <begin position="8"/>
        <end position="30"/>
    </location>
</feature>
<feature type="topological domain" description="Extracellular" evidence="1">
    <location>
        <begin position="31"/>
        <end position="35"/>
    </location>
</feature>
<feature type="transmembrane region" description="Helical" evidence="1">
    <location>
        <begin position="36"/>
        <end position="53"/>
    </location>
</feature>
<feature type="topological domain" description="Cytoplasmic" evidence="1">
    <location>
        <begin position="54"/>
        <end position="69"/>
    </location>
</feature>
<feature type="intramembrane region" evidence="1">
    <location>
        <begin position="70"/>
        <end position="80"/>
    </location>
</feature>
<feature type="topological domain" description="Cytoplasmic" evidence="1">
    <location>
        <begin position="81"/>
        <end position="86"/>
    </location>
</feature>
<feature type="transmembrane region" description="Helical" evidence="1">
    <location>
        <begin position="87"/>
        <end position="104"/>
    </location>
</feature>
<feature type="topological domain" description="Extracellular" evidence="1">
    <location>
        <position position="105"/>
    </location>
</feature>
<feature type="transmembrane region" description="Helical" evidence="1">
    <location>
        <begin position="106"/>
        <end position="126"/>
    </location>
</feature>
<feature type="topological domain" description="Cytoplasmic" evidence="1">
    <location>
        <begin position="127"/>
        <end position="192"/>
    </location>
</feature>
<feature type="region of interest" description="Disordered" evidence="2">
    <location>
        <begin position="134"/>
        <end position="192"/>
    </location>
</feature>
<feature type="modified residue" description="Phosphothreonine" evidence="1">
    <location>
        <position position="147"/>
    </location>
</feature>
<feature type="modified residue" description="Phosphoserine" evidence="11 12">
    <location>
        <position position="168"/>
    </location>
</feature>
<feature type="modified residue" description="Phosphoserine" evidence="11 12">
    <location>
        <position position="176"/>
    </location>
</feature>
<feature type="cross-link" description="Glycyl lysine isopeptide (Lys-Gly) (interchain with G-Cter in ubiquitin)" evidence="6">
    <location>
        <position position="149"/>
    </location>
</feature>
<feature type="splice variant" id="VSP_001248" description="In isoform 2." evidence="8">
    <original>CGQKYLTSVVKLFGPLTRNYYVRAALHFL</original>
    <variation>W</variation>
    <location>
        <begin position="68"/>
        <end position="96"/>
    </location>
</feature>
<feature type="sequence conflict" description="In Ref. 2; BAB32327." evidence="9" ref="2">
    <original>S</original>
    <variation>P</variation>
    <location>
        <position position="75"/>
    </location>
</feature>
<name>CY24A_MOUSE</name>
<comment type="function">
    <text evidence="1">Subunit of NADPH oxidase complexes that is required for the NADPH oxidase activity that generates, in various cell types, superoxide from molecular oxygen utilizing NADPH as an electron donor (By similarity). Subunit of the phagocyte NADPH oxidase complex that mediates the transfer of electrons from cytosolic NADPH to O2 to produce the superoxide anion (O2(-)). In the activated complex, electrons are first transferred from NADPH to flavin adenine dinucleotide (FAD) and subsequently transferred via two heme molecules to molecular oxygen, producing superoxide through an outer-sphere reaction. Activation of the NADPH oxidase complex is initiated by the assembly of cytosolic subunits of the NADPH oxidase complex with the core NADPH oxidase complex to form a complex at the plasma membrane or phagosomal membrane. This activation process is initiated by phosphorylation dependent binding of the cytosolic NCF1/p47-phox subunit to the C-terminus of CYBA/p22-phox. Aassociates with NOX3 to form a functional NADPH oxidase constitutively generating superoxide (By similarity).</text>
</comment>
<comment type="subunit">
    <text evidence="1 3 4">Component of the phagocyte NADPH oxidase core complex/cytochrome b558 complex, composed of CYBB (heavy chain (beta)) and CYBA (light chain (alpha)). Component of the phagocyte NADPH oxidase complex composed of an obligatory core heterodimer formed by the membrane proteins CYBA and CYBB and the cytosolic regulatory subunits NCF1/p47-phox, NCF2/p67-phox, NCF4/p40-phox and the small GTPase RAC1 or RAC2. Interacts with NCF1 (via SH3 domain) (By similarity). Interacts with SH3PXD2A (PubMed:19755709). Interacts with DUOX1, DUOX2 and TPO. Interacts with NOX4; this interaction mediates superoxide generation. Interacts with calprotectin (S100A8/9) (By similarity). Interacts with GBP7 (PubMed:21551061). Interacts with NOXO1. Forms a heterodimer with NOX3 and is essential for activity and cell membrane localization of NOX3. Interacts with NOX1 (By similarity).</text>
</comment>
<comment type="interaction">
    <interactant intactId="EBI-15795776">
        <id>Q61462</id>
    </interactant>
    <interactant intactId="EBI-6654585">
        <id>Q61093</id>
        <label>Cybb</label>
    </interactant>
    <organismsDiffer>false</organismsDiffer>
    <experiments>4</experiments>
</comment>
<comment type="subcellular location">
    <subcellularLocation>
        <location evidence="1">Cell membrane</location>
        <topology evidence="1">Multi-pass membrane protein</topology>
    </subcellularLocation>
</comment>
<comment type="alternative products">
    <event type="alternative splicing"/>
    <isoform>
        <id>Q61462-1</id>
        <name>1</name>
        <sequence type="displayed"/>
    </isoform>
    <isoform>
        <id>Q61462-2</id>
        <name>2</name>
        <sequence type="described" ref="VSP_001248"/>
    </isoform>
</comment>
<comment type="tissue specificity">
    <text evidence="5">The strongest level of expression is found in kidney, peritoneal neutrophils and peritoneal macrophages, and a lower level in spleen and small intestine (PubMed:2597164). Very low level of expression can be noted in brain, liver, testis, and heart (PubMed:2597164).</text>
</comment>
<comment type="PTM">
    <text evidence="6">Ubiquitinated at Lys-149 likely by RNF145.</text>
</comment>
<comment type="PTM">
    <text evidence="1">Phosphorylation at Thr-147 enhances NADPH oxidase activity by promoting NCF1/p47-phox binding.</text>
</comment>
<comment type="disruption phenotype">
    <text evidence="3 7">Mice show defects in invadopodia biogenesis (PubMed:19755709). Mutants have a very sever defect in controlling bacterial replication (PubMed:28351984). Mice show spontaneous trunk curland head bobbing and fail to exhibit contact-rghting reflex (PubMed:28351984).</text>
</comment>
<comment type="similarity">
    <text evidence="9">Belongs to the p22phox family.</text>
</comment>
<protein>
    <recommendedName>
        <fullName evidence="9">Cytochrome b-245 light chain</fullName>
    </recommendedName>
    <alternativeName>
        <fullName>Cytochrome b(558) alpha chain</fullName>
    </alternativeName>
    <alternativeName>
        <fullName>Cytochrome b558 subunit alpha</fullName>
    </alternativeName>
    <alternativeName>
        <fullName>Neutrophil cytochrome b 22 kDa polypeptide</fullName>
    </alternativeName>
    <alternativeName>
        <fullName>Superoxide-generating NADPH oxidase light chain subunit</fullName>
    </alternativeName>
    <alternativeName>
        <fullName>p22 phagocyte B-cytochrome</fullName>
    </alternativeName>
    <alternativeName>
        <fullName>p22-phox</fullName>
        <shortName>p22phox</shortName>
    </alternativeName>
</protein>